<sequence length="350" mass="38119">MAAAAMATVAVPRVKLGSQGMEVSAQGLGCMGMCPAFEPPKPEADMVALIRHAIAAGVTFFDTSDLYGPHTNEVLLGKALQGGGVRDRVELATKFGKFFAGGKPGIRGDPAYVRAACEGSLRRLGVDCIDLYYQHRVDKKVPIEVTIGELKKLVEEGKIRYIGLCEASASTIRRAHAVHPITAVQLEWSLWSRDVEEDIVPTCRELGIGIVAYSPLGKGFFSSGAKLVDSLPDHDFRKLIPRFQPGNIEKNAEIFERVNEMAARKGCTPSQLALAWIHHQGRDVCPIPGTTKIENFNQNVAALSVKLTPAEMAELESYASNVHGDRYPLMMANTTWQDSETPPLSSWKSE</sequence>
<feature type="chain" id="PRO_0000415747" description="Probable aldo-keto reductase 1">
    <location>
        <begin position="1"/>
        <end position="350"/>
    </location>
</feature>
<feature type="active site" description="Proton donor" evidence="1">
    <location>
        <position position="67"/>
    </location>
</feature>
<feature type="binding site" evidence="1">
    <location>
        <position position="135"/>
    </location>
    <ligand>
        <name>substrate</name>
    </ligand>
</feature>
<feature type="binding site" evidence="1">
    <location>
        <begin position="214"/>
        <end position="224"/>
    </location>
    <ligand>
        <name>NADP(+)</name>
        <dbReference type="ChEBI" id="CHEBI:58349"/>
    </ligand>
</feature>
<comment type="similarity">
    <text evidence="2">Belongs to the aldo/keto reductase family.</text>
</comment>
<comment type="sequence caution" evidence="2">
    <conflict type="erroneous initiation">
        <sequence resource="EMBL-CDS" id="CAH66620"/>
    </conflict>
    <text>Truncated N-terminus.</text>
</comment>
<comment type="sequence caution" evidence="2">
    <conflict type="erroneous initiation">
        <sequence resource="EMBL-CDS" id="EEC77028"/>
    </conflict>
    <text>Truncated N-terminus.</text>
</comment>
<organism>
    <name type="scientific">Oryza sativa subsp. indica</name>
    <name type="common">Rice</name>
    <dbReference type="NCBI Taxonomy" id="39946"/>
    <lineage>
        <taxon>Eukaryota</taxon>
        <taxon>Viridiplantae</taxon>
        <taxon>Streptophyta</taxon>
        <taxon>Embryophyta</taxon>
        <taxon>Tracheophyta</taxon>
        <taxon>Spermatophyta</taxon>
        <taxon>Magnoliopsida</taxon>
        <taxon>Liliopsida</taxon>
        <taxon>Poales</taxon>
        <taxon>Poaceae</taxon>
        <taxon>BOP clade</taxon>
        <taxon>Oryzoideae</taxon>
        <taxon>Oryzeae</taxon>
        <taxon>Oryzinae</taxon>
        <taxon>Oryza</taxon>
        <taxon>Oryza sativa</taxon>
    </lineage>
</organism>
<reference key="1">
    <citation type="journal article" date="2002" name="Nature">
        <title>Sequence and analysis of rice chromosome 4.</title>
        <authorList>
            <person name="Feng Q."/>
            <person name="Zhang Y."/>
            <person name="Hao P."/>
            <person name="Wang S."/>
            <person name="Fu G."/>
            <person name="Huang Y."/>
            <person name="Li Y."/>
            <person name="Zhu J."/>
            <person name="Liu Y."/>
            <person name="Hu X."/>
            <person name="Jia P."/>
            <person name="Zhang Y."/>
            <person name="Zhao Q."/>
            <person name="Ying K."/>
            <person name="Yu S."/>
            <person name="Tang Y."/>
            <person name="Weng Q."/>
            <person name="Zhang L."/>
            <person name="Lu Y."/>
            <person name="Mu J."/>
            <person name="Lu Y."/>
            <person name="Zhang L.S."/>
            <person name="Yu Z."/>
            <person name="Fan D."/>
            <person name="Liu X."/>
            <person name="Lu T."/>
            <person name="Li C."/>
            <person name="Wu Y."/>
            <person name="Sun T."/>
            <person name="Lei H."/>
            <person name="Li T."/>
            <person name="Hu H."/>
            <person name="Guan J."/>
            <person name="Wu M."/>
            <person name="Zhang R."/>
            <person name="Zhou B."/>
            <person name="Chen Z."/>
            <person name="Chen L."/>
            <person name="Jin Z."/>
            <person name="Wang R."/>
            <person name="Yin H."/>
            <person name="Cai Z."/>
            <person name="Ren S."/>
            <person name="Lv G."/>
            <person name="Gu W."/>
            <person name="Zhu G."/>
            <person name="Tu Y."/>
            <person name="Jia J."/>
            <person name="Zhang Y."/>
            <person name="Chen J."/>
            <person name="Kang H."/>
            <person name="Chen X."/>
            <person name="Shao C."/>
            <person name="Sun Y."/>
            <person name="Hu Q."/>
            <person name="Zhang X."/>
            <person name="Zhang W."/>
            <person name="Wang L."/>
            <person name="Ding C."/>
            <person name="Sheng H."/>
            <person name="Gu J."/>
            <person name="Chen S."/>
            <person name="Ni L."/>
            <person name="Zhu F."/>
            <person name="Chen W."/>
            <person name="Lan L."/>
            <person name="Lai Y."/>
            <person name="Cheng Z."/>
            <person name="Gu M."/>
            <person name="Jiang J."/>
            <person name="Li J."/>
            <person name="Hong G."/>
            <person name="Xue Y."/>
            <person name="Han B."/>
        </authorList>
    </citation>
    <scope>NUCLEOTIDE SEQUENCE [LARGE SCALE GENOMIC DNA]</scope>
    <source>
        <strain>cv. Guang-Lu-Ai No.4</strain>
    </source>
</reference>
<reference key="2">
    <citation type="journal article" date="2005" name="PLoS Biol.">
        <title>The genomes of Oryza sativa: a history of duplications.</title>
        <authorList>
            <person name="Yu J."/>
            <person name="Wang J."/>
            <person name="Lin W."/>
            <person name="Li S."/>
            <person name="Li H."/>
            <person name="Zhou J."/>
            <person name="Ni P."/>
            <person name="Dong W."/>
            <person name="Hu S."/>
            <person name="Zeng C."/>
            <person name="Zhang J."/>
            <person name="Zhang Y."/>
            <person name="Li R."/>
            <person name="Xu Z."/>
            <person name="Li S."/>
            <person name="Li X."/>
            <person name="Zheng H."/>
            <person name="Cong L."/>
            <person name="Lin L."/>
            <person name="Yin J."/>
            <person name="Geng J."/>
            <person name="Li G."/>
            <person name="Shi J."/>
            <person name="Liu J."/>
            <person name="Lv H."/>
            <person name="Li J."/>
            <person name="Wang J."/>
            <person name="Deng Y."/>
            <person name="Ran L."/>
            <person name="Shi X."/>
            <person name="Wang X."/>
            <person name="Wu Q."/>
            <person name="Li C."/>
            <person name="Ren X."/>
            <person name="Wang J."/>
            <person name="Wang X."/>
            <person name="Li D."/>
            <person name="Liu D."/>
            <person name="Zhang X."/>
            <person name="Ji Z."/>
            <person name="Zhao W."/>
            <person name="Sun Y."/>
            <person name="Zhang Z."/>
            <person name="Bao J."/>
            <person name="Han Y."/>
            <person name="Dong L."/>
            <person name="Ji J."/>
            <person name="Chen P."/>
            <person name="Wu S."/>
            <person name="Liu J."/>
            <person name="Xiao Y."/>
            <person name="Bu D."/>
            <person name="Tan J."/>
            <person name="Yang L."/>
            <person name="Ye C."/>
            <person name="Zhang J."/>
            <person name="Xu J."/>
            <person name="Zhou Y."/>
            <person name="Yu Y."/>
            <person name="Zhang B."/>
            <person name="Zhuang S."/>
            <person name="Wei H."/>
            <person name="Liu B."/>
            <person name="Lei M."/>
            <person name="Yu H."/>
            <person name="Li Y."/>
            <person name="Xu H."/>
            <person name="Wei S."/>
            <person name="He X."/>
            <person name="Fang L."/>
            <person name="Zhang Z."/>
            <person name="Zhang Y."/>
            <person name="Huang X."/>
            <person name="Su Z."/>
            <person name="Tong W."/>
            <person name="Li J."/>
            <person name="Tong Z."/>
            <person name="Li S."/>
            <person name="Ye J."/>
            <person name="Wang L."/>
            <person name="Fang L."/>
            <person name="Lei T."/>
            <person name="Chen C.-S."/>
            <person name="Chen H.-C."/>
            <person name="Xu Z."/>
            <person name="Li H."/>
            <person name="Huang H."/>
            <person name="Zhang F."/>
            <person name="Xu H."/>
            <person name="Li N."/>
            <person name="Zhao C."/>
            <person name="Li S."/>
            <person name="Dong L."/>
            <person name="Huang Y."/>
            <person name="Li L."/>
            <person name="Xi Y."/>
            <person name="Qi Q."/>
            <person name="Li W."/>
            <person name="Zhang B."/>
            <person name="Hu W."/>
            <person name="Zhang Y."/>
            <person name="Tian X."/>
            <person name="Jiao Y."/>
            <person name="Liang X."/>
            <person name="Jin J."/>
            <person name="Gao L."/>
            <person name="Zheng W."/>
            <person name="Hao B."/>
            <person name="Liu S.-M."/>
            <person name="Wang W."/>
            <person name="Yuan L."/>
            <person name="Cao M."/>
            <person name="McDermott J."/>
            <person name="Samudrala R."/>
            <person name="Wang J."/>
            <person name="Wong G.K.-S."/>
            <person name="Yang H."/>
        </authorList>
    </citation>
    <scope>NUCLEOTIDE SEQUENCE [LARGE SCALE GENOMIC DNA]</scope>
    <source>
        <strain>cv. 93-11</strain>
    </source>
</reference>
<proteinExistence type="inferred from homology"/>
<name>AKR1_ORYSI</name>
<evidence type="ECO:0000250" key="1"/>
<evidence type="ECO:0000305" key="2"/>
<protein>
    <recommendedName>
        <fullName>Probable aldo-keto reductase 1</fullName>
        <ecNumber>1.1.1.-</ecNumber>
    </recommendedName>
</protein>
<gene>
    <name type="ORF">OsI_15385</name>
</gene>
<dbReference type="EC" id="1.1.1.-"/>
<dbReference type="EMBL" id="CR855122">
    <property type="protein sequence ID" value="CAH66620.1"/>
    <property type="status" value="ALT_INIT"/>
    <property type="molecule type" value="Genomic_DNA"/>
</dbReference>
<dbReference type="EMBL" id="CM000129">
    <property type="protein sequence ID" value="EEC77028.1"/>
    <property type="status" value="ALT_INIT"/>
    <property type="molecule type" value="Genomic_DNA"/>
</dbReference>
<dbReference type="SMR" id="B8ASB2"/>
<dbReference type="STRING" id="39946.B8ASB2"/>
<dbReference type="EnsemblPlants" id="OsIR64_04g0008040.01">
    <property type="protein sequence ID" value="OsIR64_04g0008040.01"/>
    <property type="gene ID" value="OsIR64_04g0008040"/>
</dbReference>
<dbReference type="Gramene" id="OsIR64_04g0008040.01">
    <property type="protein sequence ID" value="OsIR64_04g0008040.01"/>
    <property type="gene ID" value="OsIR64_04g0008040"/>
</dbReference>
<dbReference type="HOGENOM" id="CLU_023205_2_1_1"/>
<dbReference type="Proteomes" id="UP000007015">
    <property type="component" value="Chromosome 4"/>
</dbReference>
<dbReference type="GO" id="GO:0005737">
    <property type="term" value="C:cytoplasm"/>
    <property type="evidence" value="ECO:0007669"/>
    <property type="project" value="TreeGrafter"/>
</dbReference>
<dbReference type="GO" id="GO:0004033">
    <property type="term" value="F:aldo-keto reductase (NADPH) activity"/>
    <property type="evidence" value="ECO:0007669"/>
    <property type="project" value="TreeGrafter"/>
</dbReference>
<dbReference type="CDD" id="cd19145">
    <property type="entry name" value="AKR_AKR13D1"/>
    <property type="match status" value="1"/>
</dbReference>
<dbReference type="FunFam" id="3.20.20.100:FF:000048">
    <property type="entry name" value="Probable aldo-keto reductase 4"/>
    <property type="match status" value="1"/>
</dbReference>
<dbReference type="Gene3D" id="3.20.20.100">
    <property type="entry name" value="NADP-dependent oxidoreductase domain"/>
    <property type="match status" value="1"/>
</dbReference>
<dbReference type="InterPro" id="IPR050791">
    <property type="entry name" value="Aldo-Keto_reductase"/>
</dbReference>
<dbReference type="InterPro" id="IPR023210">
    <property type="entry name" value="NADP_OxRdtase_dom"/>
</dbReference>
<dbReference type="InterPro" id="IPR036812">
    <property type="entry name" value="NADP_OxRdtase_dom_sf"/>
</dbReference>
<dbReference type="PANTHER" id="PTHR43625">
    <property type="entry name" value="AFLATOXIN B1 ALDEHYDE REDUCTASE"/>
    <property type="match status" value="1"/>
</dbReference>
<dbReference type="PANTHER" id="PTHR43625:SF40">
    <property type="entry name" value="ALDO-KETO REDUCTASE YAKC [NADP(+)]"/>
    <property type="match status" value="1"/>
</dbReference>
<dbReference type="Pfam" id="PF00248">
    <property type="entry name" value="Aldo_ket_red"/>
    <property type="match status" value="1"/>
</dbReference>
<dbReference type="SUPFAM" id="SSF51430">
    <property type="entry name" value="NAD(P)-linked oxidoreductase"/>
    <property type="match status" value="1"/>
</dbReference>
<keyword id="KW-0521">NADP</keyword>
<keyword id="KW-0560">Oxidoreductase</keyword>
<keyword id="KW-1185">Reference proteome</keyword>
<accession>B8ASB2</accession>
<accession>Q01KV1</accession>